<sequence>MATVAEQWVLVEMVQALYEAPAYHLILEGILILWIIRLVFSKTYKLQERSDLTAKEKEELIEEWQPEPLVPPVSKNHPALNYNIVSGPPTHNIVVNGKECVNFASFNFLGLLANPRVKATAFSSLKKYGVGTCGPRGFYGTFDVHLDLEERLAKFMKTEEAIIYSYGFSTIASAIPAYSKRGDIIFVDSAACFAIQKGLQASRSDIKLFKHNDVADLERLLKEQEIEDQKNPRKARVTRRFIVVEGLYMNTGTICPLPELVKLKYKYKARIFLEESLSFGVLGEHGRGVTEHYGISIDDIDLISANMENALASVGGFCCGRSFVVDHQRLSGQGYCFSASLPPLLAAAAIEALNIMEENPDIFAVLKKKCQNIHKSLQGVSGLKVVGESLSPALHLQLEESTGSREKDVKLLQAIVDQCMDKGIALTQARYLDKEEKCLPPPSIRVVVTVEQTEEELQRAASTIREAAQAVLL</sequence>
<protein>
    <recommendedName>
        <fullName>Serine palmitoyltransferase 1</fullName>
        <ecNumber evidence="2">2.3.1.50</ecNumber>
    </recommendedName>
    <alternativeName>
        <fullName>Long chain base biosynthesis protein 1</fullName>
        <shortName>LCB 1</shortName>
    </alternativeName>
    <alternativeName>
        <fullName>Serine-palmitoyl-CoA transferase 1</fullName>
        <shortName>SPT 1</shortName>
        <shortName>SPT1</shortName>
    </alternativeName>
</protein>
<gene>
    <name type="primary">Sptlc1</name>
    <name type="synonym">Lcb1</name>
</gene>
<evidence type="ECO:0000250" key="1"/>
<evidence type="ECO:0000250" key="2">
    <source>
        <dbReference type="UniProtKB" id="O15269"/>
    </source>
</evidence>
<evidence type="ECO:0000255" key="3"/>
<evidence type="ECO:0000269" key="4">
    <source>
    </source>
</evidence>
<evidence type="ECO:0000269" key="5">
    <source>
    </source>
</evidence>
<evidence type="ECO:0000269" key="6">
    <source>
    </source>
</evidence>
<evidence type="ECO:0000269" key="7">
    <source>
    </source>
</evidence>
<evidence type="ECO:0000269" key="8">
    <source>
    </source>
</evidence>
<evidence type="ECO:0000305" key="9"/>
<accession>O35704</accession>
<accession>O54813</accession>
<accession>Q8BH11</accession>
<comment type="function">
    <text evidence="2 8">Component of the serine palmitoyltransferase multisubunit enzyme (SPT) that catalyzes the initial and rate-limiting step in sphingolipid biosynthesis by condensing L-serine and activated acyl-CoA (most commonly palmitoyl-CoA) to form long-chain bases (PubMed:28100772). The SPT complex is also composed of SPTLC2 or SPTLC3 and SPTSSA or SPTSSB. Within this complex, the heterodimer with SPTLC2 or SPTLC3 forms the catalytic core. The composition of the serine palmitoyltransferase (SPT) complex determines the substrate preference. The SPTLC1-SPTLC2-SPTSSA complex shows a strong preference for C16-CoA substrate, while the SPTLC1-SPTLC3-SPTSSA isozyme uses both C14-CoA and C16-CoA as substrates, with a slight preference for C14-CoA. The SPTLC1-SPTLC2-SPTSSB complex shows a strong preference for C18-CoA substrate, while the SPTLC1-SPTLC3-SPTSSB isozyme displays an ability to use a broader range of acyl-CoAs, without apparent preference (By similarity). Required for adipocyte cell viability and metabolic homeostasis (PubMed:28100772).</text>
</comment>
<comment type="catalytic activity">
    <reaction evidence="2">
        <text>L-serine + hexadecanoyl-CoA + H(+) = 3-oxosphinganine + CO2 + CoA</text>
        <dbReference type="Rhea" id="RHEA:14761"/>
        <dbReference type="ChEBI" id="CHEBI:15378"/>
        <dbReference type="ChEBI" id="CHEBI:16526"/>
        <dbReference type="ChEBI" id="CHEBI:33384"/>
        <dbReference type="ChEBI" id="CHEBI:57287"/>
        <dbReference type="ChEBI" id="CHEBI:57379"/>
        <dbReference type="ChEBI" id="CHEBI:58299"/>
        <dbReference type="EC" id="2.3.1.50"/>
    </reaction>
    <physiologicalReaction direction="left-to-right" evidence="2">
        <dbReference type="Rhea" id="RHEA:14762"/>
    </physiologicalReaction>
</comment>
<comment type="catalytic activity">
    <reaction evidence="2">
        <text>octadecanoyl-CoA + L-serine + H(+) = 3-oxoeicosasphinganine + CO2 + CoA</text>
        <dbReference type="Rhea" id="RHEA:33683"/>
        <dbReference type="ChEBI" id="CHEBI:15378"/>
        <dbReference type="ChEBI" id="CHEBI:16526"/>
        <dbReference type="ChEBI" id="CHEBI:33384"/>
        <dbReference type="ChEBI" id="CHEBI:57287"/>
        <dbReference type="ChEBI" id="CHEBI:57394"/>
        <dbReference type="ChEBI" id="CHEBI:65073"/>
    </reaction>
    <physiologicalReaction direction="left-to-right" evidence="2">
        <dbReference type="Rhea" id="RHEA:33684"/>
    </physiologicalReaction>
</comment>
<comment type="catalytic activity">
    <reaction evidence="2">
        <text>tetradecanoyl-CoA + L-serine + H(+) = 3-oxohexadecasphinganine + CO2 + CoA</text>
        <dbReference type="Rhea" id="RHEA:35675"/>
        <dbReference type="ChEBI" id="CHEBI:15378"/>
        <dbReference type="ChEBI" id="CHEBI:16526"/>
        <dbReference type="ChEBI" id="CHEBI:33384"/>
        <dbReference type="ChEBI" id="CHEBI:57287"/>
        <dbReference type="ChEBI" id="CHEBI:57385"/>
        <dbReference type="ChEBI" id="CHEBI:71007"/>
    </reaction>
    <physiologicalReaction direction="left-to-right" evidence="2">
        <dbReference type="Rhea" id="RHEA:35676"/>
    </physiologicalReaction>
</comment>
<comment type="catalytic activity">
    <reaction evidence="2">
        <text>dodecanoyl-CoA + L-serine + H(+) = 3-oxotetradecasphinganine + CO2 + CoA</text>
        <dbReference type="Rhea" id="RHEA:35679"/>
        <dbReference type="ChEBI" id="CHEBI:15378"/>
        <dbReference type="ChEBI" id="CHEBI:16526"/>
        <dbReference type="ChEBI" id="CHEBI:33384"/>
        <dbReference type="ChEBI" id="CHEBI:57287"/>
        <dbReference type="ChEBI" id="CHEBI:57375"/>
        <dbReference type="ChEBI" id="CHEBI:71008"/>
    </reaction>
    <physiologicalReaction direction="left-to-right" evidence="2">
        <dbReference type="Rhea" id="RHEA:35680"/>
    </physiologicalReaction>
</comment>
<comment type="cofactor">
    <cofactor evidence="1">
        <name>pyridoxal 5'-phosphate</name>
        <dbReference type="ChEBI" id="CHEBI:597326"/>
    </cofactor>
</comment>
<comment type="activity regulation">
    <text evidence="2 9">SPT complex catalytic activity is negatively regulated by ORMDL proteins, including ORMDL3, in the presence of ceramides (By similarity). This mechanism allows to maintain ceramide levels at sufficient concentrations for the production of complex sphingolipids, but which prevents the accumulation of ceramides to levels that trigger apoptosis (Probable).</text>
</comment>
<comment type="pathway">
    <text evidence="8">Lipid metabolism; sphingolipid metabolism.</text>
</comment>
<comment type="subunit">
    <text evidence="2 6">Component of the serine palmitoyltransferase (SPT) complex, which is also composed of SPTLC2 or SPTLC3 and SPTSSA or SPTSSB (By similarity). The heterodimer with SPTLC2 or SPTLC3 forms the catalytic core of the enzyme, while SPTSSA or SPTSSB subunits determine substrate specificity (By similarity). SPT also interacts with ORMDL proteins, especially ORMDL3, which negatively regulate SPT activity in the presence of ceramides (By similarity). Forms dimers of heterodimers with SPTLC2 (By similarity). Interacts with RTN4 (isoform B) (PubMed:26301690).</text>
</comment>
<comment type="subcellular location">
    <subcellularLocation>
        <location evidence="4 6">Endoplasmic reticulum membrane</location>
        <topology evidence="4">Single-pass membrane protein</topology>
    </subcellularLocation>
</comment>
<comment type="tissue specificity">
    <text evidence="5 7">Expressed in a variety of tissues. Highest expression in brain, kidney and liver (PubMed:21994399). Expressed in brown and white adipose tissues (PubMed:27818258).</text>
</comment>
<comment type="developmental stage">
    <text evidence="5">Highly expressed after birth, expression decreases 2 weeks after birth and is maintained until, at least, 18 months.</text>
</comment>
<comment type="induction">
    <text evidence="5">Expression levels at protein level increase upon high-fat diet. mRNA levels remain unchanged.</text>
</comment>
<comment type="domain">
    <text evidence="2">The transmembrane domain is involved in the interaction with ORMDL3.</text>
</comment>
<comment type="PTM">
    <text evidence="2">Phosphorylation at Tyr-164 inhibits activity and promotes cell survival.</text>
</comment>
<comment type="disruption phenotype">
    <text evidence="8">Knockout are lethal at embryonic stage (PubMed:28100772). Conditional knockouts specific to the adipose tissue develop adipose tissue but exhibit a striking age dependent loss of adipose tissue accompanied by evidence of adipocyte death, increased macrophage infiltration and tissue fibrosis. They also have elevated fasting blood glucose, fatty liver and insulin resistance. They show a significant reduction of total sphingomyelin levels in the adipose tissue (PubMed:28100772).</text>
</comment>
<comment type="similarity">
    <text evidence="9">Belongs to the class-II pyridoxal-phosphate-dependent aminotransferase family.</text>
</comment>
<feature type="chain" id="PRO_0000163855" description="Serine palmitoyltransferase 1">
    <location>
        <begin position="1"/>
        <end position="473"/>
    </location>
</feature>
<feature type="topological domain" description="Lumenal" evidence="3">
    <location>
        <begin position="1"/>
        <end position="15"/>
    </location>
</feature>
<feature type="transmembrane region" description="Helical" evidence="3">
    <location>
        <begin position="16"/>
        <end position="36"/>
    </location>
</feature>
<feature type="topological domain" description="Cytoplasmic" evidence="3">
    <location>
        <begin position="37"/>
        <end position="473"/>
    </location>
</feature>
<feature type="region of interest" description="Interaction with SPTLC2" evidence="2">
    <location>
        <begin position="1"/>
        <end position="66"/>
    </location>
</feature>
<feature type="modified residue" description="Phosphotyrosine; by ABL" evidence="2">
    <location>
        <position position="164"/>
    </location>
</feature>
<feature type="sequence conflict" description="In Ref. 2; AAC02264." evidence="9" ref="2">
    <original>EQ</original>
    <variation>DE</variation>
    <location>
        <begin position="6"/>
        <end position="7"/>
    </location>
</feature>
<feature type="sequence conflict" description="In Ref. 2; AAC02264." evidence="9" ref="2">
    <original>V</original>
    <variation>E</variation>
    <location>
        <position position="85"/>
    </location>
</feature>
<feature type="sequence conflict" description="In Ref. 1; CAA64897 and 2; AAC02264." evidence="9" ref="1 2">
    <original>T</original>
    <variation>A</variation>
    <location>
        <position position="120"/>
    </location>
</feature>
<feature type="sequence conflict" description="In Ref. 2; AAC02264." evidence="9" ref="2">
    <original>S</original>
    <variation>T</variation>
    <location>
        <position position="165"/>
    </location>
</feature>
<feature type="sequence conflict" description="In Ref. 1; CAA64897 and 2; AAC02264." evidence="9" ref="1 2">
    <original>I</original>
    <variation>V</variation>
    <location>
        <position position="171"/>
    </location>
</feature>
<name>SPTC1_MOUSE</name>
<dbReference type="EC" id="2.3.1.50" evidence="2"/>
<dbReference type="EMBL" id="X95641">
    <property type="protein sequence ID" value="CAA64897.1"/>
    <property type="molecule type" value="mRNA"/>
</dbReference>
<dbReference type="EMBL" id="AF003823">
    <property type="protein sequence ID" value="AAC02264.1"/>
    <property type="molecule type" value="mRNA"/>
</dbReference>
<dbReference type="EMBL" id="AK053207">
    <property type="protein sequence ID" value="BAC35310.1"/>
    <property type="molecule type" value="mRNA"/>
</dbReference>
<dbReference type="EMBL" id="AK079578">
    <property type="protein sequence ID" value="BAC37690.1"/>
    <property type="molecule type" value="mRNA"/>
</dbReference>
<dbReference type="EMBL" id="AK084391">
    <property type="protein sequence ID" value="BAC39172.1"/>
    <property type="molecule type" value="mRNA"/>
</dbReference>
<dbReference type="EMBL" id="AK084445">
    <property type="protein sequence ID" value="BAC39185.1"/>
    <property type="molecule type" value="mRNA"/>
</dbReference>
<dbReference type="EMBL" id="BC046323">
    <property type="protein sequence ID" value="AAH46323.1"/>
    <property type="molecule type" value="mRNA"/>
</dbReference>
<dbReference type="CCDS" id="CCDS26521.1"/>
<dbReference type="RefSeq" id="NP_033295.2">
    <property type="nucleotide sequence ID" value="NM_009269.2"/>
</dbReference>
<dbReference type="SMR" id="O35704"/>
<dbReference type="BioGRID" id="234529">
    <property type="interactions" value="7"/>
</dbReference>
<dbReference type="FunCoup" id="O35704">
    <property type="interactions" value="3945"/>
</dbReference>
<dbReference type="STRING" id="10090.ENSMUSP00000021920"/>
<dbReference type="GuidetoPHARMACOLOGY" id="2509"/>
<dbReference type="iPTMnet" id="O35704"/>
<dbReference type="PhosphoSitePlus" id="O35704"/>
<dbReference type="PaxDb" id="10090-ENSMUSP00000021920"/>
<dbReference type="PeptideAtlas" id="O35704"/>
<dbReference type="ProteomicsDB" id="257058"/>
<dbReference type="Pumba" id="O35704"/>
<dbReference type="Antibodypedia" id="2269">
    <property type="antibodies" value="395 antibodies from 37 providers"/>
</dbReference>
<dbReference type="DNASU" id="268656"/>
<dbReference type="Ensembl" id="ENSMUST00000021920.8">
    <property type="protein sequence ID" value="ENSMUSP00000021920.7"/>
    <property type="gene ID" value="ENSMUSG00000021468.9"/>
</dbReference>
<dbReference type="GeneID" id="268656"/>
<dbReference type="KEGG" id="mmu:268656"/>
<dbReference type="UCSC" id="uc007qnk.2">
    <property type="organism name" value="mouse"/>
</dbReference>
<dbReference type="AGR" id="MGI:1099431"/>
<dbReference type="CTD" id="10558"/>
<dbReference type="MGI" id="MGI:1099431">
    <property type="gene designation" value="Sptlc1"/>
</dbReference>
<dbReference type="VEuPathDB" id="HostDB:ENSMUSG00000021468"/>
<dbReference type="eggNOG" id="KOG1358">
    <property type="taxonomic scope" value="Eukaryota"/>
</dbReference>
<dbReference type="GeneTree" id="ENSGT00550000074872"/>
<dbReference type="HOGENOM" id="CLU_015846_0_1_1"/>
<dbReference type="InParanoid" id="O35704"/>
<dbReference type="OMA" id="LTKYGCG"/>
<dbReference type="OrthoDB" id="3168162at2759"/>
<dbReference type="PhylomeDB" id="O35704"/>
<dbReference type="TreeFam" id="TF314877"/>
<dbReference type="Reactome" id="R-MMU-1660661">
    <property type="pathway name" value="Sphingolipid de novo biosynthesis"/>
</dbReference>
<dbReference type="UniPathway" id="UPA00222"/>
<dbReference type="BioGRID-ORCS" id="268656">
    <property type="hits" value="28 hits in 83 CRISPR screens"/>
</dbReference>
<dbReference type="PRO" id="PR:O35704"/>
<dbReference type="Proteomes" id="UP000000589">
    <property type="component" value="Chromosome 13"/>
</dbReference>
<dbReference type="RNAct" id="O35704">
    <property type="molecule type" value="protein"/>
</dbReference>
<dbReference type="Bgee" id="ENSMUSG00000021468">
    <property type="expression patterns" value="Expressed in gastrula and 261 other cell types or tissues"/>
</dbReference>
<dbReference type="GO" id="GO:0005789">
    <property type="term" value="C:endoplasmic reticulum membrane"/>
    <property type="evidence" value="ECO:0000314"/>
    <property type="project" value="UniProtKB"/>
</dbReference>
<dbReference type="GO" id="GO:0017059">
    <property type="term" value="C:serine palmitoyltransferase complex"/>
    <property type="evidence" value="ECO:0000250"/>
    <property type="project" value="UniProtKB"/>
</dbReference>
<dbReference type="GO" id="GO:0030170">
    <property type="term" value="F:pyridoxal phosphate binding"/>
    <property type="evidence" value="ECO:0007669"/>
    <property type="project" value="InterPro"/>
</dbReference>
<dbReference type="GO" id="GO:0004758">
    <property type="term" value="F:serine C-palmitoyltransferase activity"/>
    <property type="evidence" value="ECO:0000315"/>
    <property type="project" value="UniProtKB"/>
</dbReference>
<dbReference type="GO" id="GO:0046513">
    <property type="term" value="P:ceramide biosynthetic process"/>
    <property type="evidence" value="ECO:0000315"/>
    <property type="project" value="MGI"/>
</dbReference>
<dbReference type="GO" id="GO:0061724">
    <property type="term" value="P:lipophagy"/>
    <property type="evidence" value="ECO:0000266"/>
    <property type="project" value="MGI"/>
</dbReference>
<dbReference type="GO" id="GO:1904504">
    <property type="term" value="P:positive regulation of lipophagy"/>
    <property type="evidence" value="ECO:0000266"/>
    <property type="project" value="MGI"/>
</dbReference>
<dbReference type="GO" id="GO:1904649">
    <property type="term" value="P:regulation of fat cell apoptotic process"/>
    <property type="evidence" value="ECO:0000315"/>
    <property type="project" value="UniProtKB"/>
</dbReference>
<dbReference type="GO" id="GO:0046511">
    <property type="term" value="P:sphinganine biosynthetic process"/>
    <property type="evidence" value="ECO:0000315"/>
    <property type="project" value="MGI"/>
</dbReference>
<dbReference type="GO" id="GO:0030148">
    <property type="term" value="P:sphingolipid biosynthetic process"/>
    <property type="evidence" value="ECO:0000266"/>
    <property type="project" value="MGI"/>
</dbReference>
<dbReference type="GO" id="GO:0006665">
    <property type="term" value="P:sphingolipid metabolic process"/>
    <property type="evidence" value="ECO:0000315"/>
    <property type="project" value="UniProtKB"/>
</dbReference>
<dbReference type="GO" id="GO:0006686">
    <property type="term" value="P:sphingomyelin biosynthetic process"/>
    <property type="evidence" value="ECO:0000314"/>
    <property type="project" value="UniProtKB"/>
</dbReference>
<dbReference type="GO" id="GO:0046512">
    <property type="term" value="P:sphingosine biosynthetic process"/>
    <property type="evidence" value="ECO:0000315"/>
    <property type="project" value="MGI"/>
</dbReference>
<dbReference type="FunFam" id="3.40.640.10:FF:000049">
    <property type="entry name" value="serine palmitoyltransferase 1 isoform X1"/>
    <property type="match status" value="1"/>
</dbReference>
<dbReference type="Gene3D" id="3.90.1150.10">
    <property type="entry name" value="Aspartate Aminotransferase, domain 1"/>
    <property type="match status" value="1"/>
</dbReference>
<dbReference type="Gene3D" id="3.40.640.10">
    <property type="entry name" value="Type I PLP-dependent aspartate aminotransferase-like (Major domain)"/>
    <property type="match status" value="1"/>
</dbReference>
<dbReference type="InterPro" id="IPR004839">
    <property type="entry name" value="Aminotransferase_I/II_large"/>
</dbReference>
<dbReference type="InterPro" id="IPR050087">
    <property type="entry name" value="AON_synthase_class-II"/>
</dbReference>
<dbReference type="InterPro" id="IPR015424">
    <property type="entry name" value="PyrdxlP-dep_Trfase"/>
</dbReference>
<dbReference type="InterPro" id="IPR015421">
    <property type="entry name" value="PyrdxlP-dep_Trfase_major"/>
</dbReference>
<dbReference type="InterPro" id="IPR015422">
    <property type="entry name" value="PyrdxlP-dep_Trfase_small"/>
</dbReference>
<dbReference type="PANTHER" id="PTHR13693">
    <property type="entry name" value="CLASS II AMINOTRANSFERASE/8-AMINO-7-OXONONANOATE SYNTHASE"/>
    <property type="match status" value="1"/>
</dbReference>
<dbReference type="PANTHER" id="PTHR13693:SF2">
    <property type="entry name" value="SERINE PALMITOYLTRANSFERASE 1"/>
    <property type="match status" value="1"/>
</dbReference>
<dbReference type="Pfam" id="PF00155">
    <property type="entry name" value="Aminotran_1_2"/>
    <property type="match status" value="1"/>
</dbReference>
<dbReference type="SUPFAM" id="SSF53383">
    <property type="entry name" value="PLP-dependent transferases"/>
    <property type="match status" value="1"/>
</dbReference>
<proteinExistence type="evidence at protein level"/>
<keyword id="KW-0012">Acyltransferase</keyword>
<keyword id="KW-0256">Endoplasmic reticulum</keyword>
<keyword id="KW-0443">Lipid metabolism</keyword>
<keyword id="KW-0472">Membrane</keyword>
<keyword id="KW-0597">Phosphoprotein</keyword>
<keyword id="KW-0663">Pyridoxal phosphate</keyword>
<keyword id="KW-1185">Reference proteome</keyword>
<keyword id="KW-0746">Sphingolipid metabolism</keyword>
<keyword id="KW-0808">Transferase</keyword>
<keyword id="KW-0812">Transmembrane</keyword>
<keyword id="KW-1133">Transmembrane helix</keyword>
<reference key="1">
    <citation type="journal article" date="1997" name="Eur. J. Biochem.">
        <title>Human and murine serine-palmitoyl-CoA transferase. Cloning, expression and characterization of the key enzyme in sphingolipid synthesis.</title>
        <authorList>
            <person name="Weiss B."/>
            <person name="Stoffel W."/>
        </authorList>
    </citation>
    <scope>NUCLEOTIDE SEQUENCE [MRNA]</scope>
    <source>
        <strain>BALB/cJ</strain>
        <tissue>Kidney</tissue>
        <tissue>Liver</tissue>
    </source>
</reference>
<reference key="2">
    <citation type="journal article" date="1997" name="J. Biol. Chem.">
        <title>A mammalian homolog of the yeast LCB1 encodes a component of serine palmitoyltransferase, the enzyme catalyzing the first step in sphingolipid synthesis.</title>
        <authorList>
            <person name="Hanada K."/>
            <person name="Hara T."/>
            <person name="Nishijima M."/>
            <person name="Kuge O."/>
            <person name="Dickson R.C."/>
            <person name="Nagiec M.M."/>
        </authorList>
    </citation>
    <scope>NUCLEOTIDE SEQUENCE [MRNA]</scope>
    <source>
        <tissue>Kidney</tissue>
        <tissue>Testis</tissue>
    </source>
</reference>
<reference key="3">
    <citation type="journal article" date="2005" name="Science">
        <title>The transcriptional landscape of the mammalian genome.</title>
        <authorList>
            <person name="Carninci P."/>
            <person name="Kasukawa T."/>
            <person name="Katayama S."/>
            <person name="Gough J."/>
            <person name="Frith M.C."/>
            <person name="Maeda N."/>
            <person name="Oyama R."/>
            <person name="Ravasi T."/>
            <person name="Lenhard B."/>
            <person name="Wells C."/>
            <person name="Kodzius R."/>
            <person name="Shimokawa K."/>
            <person name="Bajic V.B."/>
            <person name="Brenner S.E."/>
            <person name="Batalov S."/>
            <person name="Forrest A.R."/>
            <person name="Zavolan M."/>
            <person name="Davis M.J."/>
            <person name="Wilming L.G."/>
            <person name="Aidinis V."/>
            <person name="Allen J.E."/>
            <person name="Ambesi-Impiombato A."/>
            <person name="Apweiler R."/>
            <person name="Aturaliya R.N."/>
            <person name="Bailey T.L."/>
            <person name="Bansal M."/>
            <person name="Baxter L."/>
            <person name="Beisel K.W."/>
            <person name="Bersano T."/>
            <person name="Bono H."/>
            <person name="Chalk A.M."/>
            <person name="Chiu K.P."/>
            <person name="Choudhary V."/>
            <person name="Christoffels A."/>
            <person name="Clutterbuck D.R."/>
            <person name="Crowe M.L."/>
            <person name="Dalla E."/>
            <person name="Dalrymple B.P."/>
            <person name="de Bono B."/>
            <person name="Della Gatta G."/>
            <person name="di Bernardo D."/>
            <person name="Down T."/>
            <person name="Engstrom P."/>
            <person name="Fagiolini M."/>
            <person name="Faulkner G."/>
            <person name="Fletcher C.F."/>
            <person name="Fukushima T."/>
            <person name="Furuno M."/>
            <person name="Futaki S."/>
            <person name="Gariboldi M."/>
            <person name="Georgii-Hemming P."/>
            <person name="Gingeras T.R."/>
            <person name="Gojobori T."/>
            <person name="Green R.E."/>
            <person name="Gustincich S."/>
            <person name="Harbers M."/>
            <person name="Hayashi Y."/>
            <person name="Hensch T.K."/>
            <person name="Hirokawa N."/>
            <person name="Hill D."/>
            <person name="Huminiecki L."/>
            <person name="Iacono M."/>
            <person name="Ikeo K."/>
            <person name="Iwama A."/>
            <person name="Ishikawa T."/>
            <person name="Jakt M."/>
            <person name="Kanapin A."/>
            <person name="Katoh M."/>
            <person name="Kawasawa Y."/>
            <person name="Kelso J."/>
            <person name="Kitamura H."/>
            <person name="Kitano H."/>
            <person name="Kollias G."/>
            <person name="Krishnan S.P."/>
            <person name="Kruger A."/>
            <person name="Kummerfeld S.K."/>
            <person name="Kurochkin I.V."/>
            <person name="Lareau L.F."/>
            <person name="Lazarevic D."/>
            <person name="Lipovich L."/>
            <person name="Liu J."/>
            <person name="Liuni S."/>
            <person name="McWilliam S."/>
            <person name="Madan Babu M."/>
            <person name="Madera M."/>
            <person name="Marchionni L."/>
            <person name="Matsuda H."/>
            <person name="Matsuzawa S."/>
            <person name="Miki H."/>
            <person name="Mignone F."/>
            <person name="Miyake S."/>
            <person name="Morris K."/>
            <person name="Mottagui-Tabar S."/>
            <person name="Mulder N."/>
            <person name="Nakano N."/>
            <person name="Nakauchi H."/>
            <person name="Ng P."/>
            <person name="Nilsson R."/>
            <person name="Nishiguchi S."/>
            <person name="Nishikawa S."/>
            <person name="Nori F."/>
            <person name="Ohara O."/>
            <person name="Okazaki Y."/>
            <person name="Orlando V."/>
            <person name="Pang K.C."/>
            <person name="Pavan W.J."/>
            <person name="Pavesi G."/>
            <person name="Pesole G."/>
            <person name="Petrovsky N."/>
            <person name="Piazza S."/>
            <person name="Reed J."/>
            <person name="Reid J.F."/>
            <person name="Ring B.Z."/>
            <person name="Ringwald M."/>
            <person name="Rost B."/>
            <person name="Ruan Y."/>
            <person name="Salzberg S.L."/>
            <person name="Sandelin A."/>
            <person name="Schneider C."/>
            <person name="Schoenbach C."/>
            <person name="Sekiguchi K."/>
            <person name="Semple C.A."/>
            <person name="Seno S."/>
            <person name="Sessa L."/>
            <person name="Sheng Y."/>
            <person name="Shibata Y."/>
            <person name="Shimada H."/>
            <person name="Shimada K."/>
            <person name="Silva D."/>
            <person name="Sinclair B."/>
            <person name="Sperling S."/>
            <person name="Stupka E."/>
            <person name="Sugiura K."/>
            <person name="Sultana R."/>
            <person name="Takenaka Y."/>
            <person name="Taki K."/>
            <person name="Tammoja K."/>
            <person name="Tan S.L."/>
            <person name="Tang S."/>
            <person name="Taylor M.S."/>
            <person name="Tegner J."/>
            <person name="Teichmann S.A."/>
            <person name="Ueda H.R."/>
            <person name="van Nimwegen E."/>
            <person name="Verardo R."/>
            <person name="Wei C.L."/>
            <person name="Yagi K."/>
            <person name="Yamanishi H."/>
            <person name="Zabarovsky E."/>
            <person name="Zhu S."/>
            <person name="Zimmer A."/>
            <person name="Hide W."/>
            <person name="Bult C."/>
            <person name="Grimmond S.M."/>
            <person name="Teasdale R.D."/>
            <person name="Liu E.T."/>
            <person name="Brusic V."/>
            <person name="Quackenbush J."/>
            <person name="Wahlestedt C."/>
            <person name="Mattick J.S."/>
            <person name="Hume D.A."/>
            <person name="Kai C."/>
            <person name="Sasaki D."/>
            <person name="Tomaru Y."/>
            <person name="Fukuda S."/>
            <person name="Kanamori-Katayama M."/>
            <person name="Suzuki M."/>
            <person name="Aoki J."/>
            <person name="Arakawa T."/>
            <person name="Iida J."/>
            <person name="Imamura K."/>
            <person name="Itoh M."/>
            <person name="Kato T."/>
            <person name="Kawaji H."/>
            <person name="Kawagashira N."/>
            <person name="Kawashima T."/>
            <person name="Kojima M."/>
            <person name="Kondo S."/>
            <person name="Konno H."/>
            <person name="Nakano K."/>
            <person name="Ninomiya N."/>
            <person name="Nishio T."/>
            <person name="Okada M."/>
            <person name="Plessy C."/>
            <person name="Shibata K."/>
            <person name="Shiraki T."/>
            <person name="Suzuki S."/>
            <person name="Tagami M."/>
            <person name="Waki K."/>
            <person name="Watahiki A."/>
            <person name="Okamura-Oho Y."/>
            <person name="Suzuki H."/>
            <person name="Kawai J."/>
            <person name="Hayashizaki Y."/>
        </authorList>
    </citation>
    <scope>NUCLEOTIDE SEQUENCE [LARGE SCALE MRNA]</scope>
    <source>
        <strain>C57BL/6J</strain>
        <tissue>Eye</tissue>
        <tissue>Hypothalamus</tissue>
        <tissue>Lung</tissue>
    </source>
</reference>
<reference key="4">
    <citation type="journal article" date="2004" name="Genome Res.">
        <title>The status, quality, and expansion of the NIH full-length cDNA project: the Mammalian Gene Collection (MGC).</title>
        <authorList>
            <consortium name="The MGC Project Team"/>
        </authorList>
    </citation>
    <scope>NUCLEOTIDE SEQUENCE [LARGE SCALE MRNA]</scope>
    <source>
        <tissue>Olfactory epithelium</tissue>
    </source>
</reference>
<reference key="5">
    <citation type="journal article" date="1992" name="J. Biol. Chem.">
        <title>Subcellular localization and membrane topology of serine palmitoyltransferase, 3-dehydrosphinganine reductase, and sphinganine N-acyltransferase in mouse liver.</title>
        <authorList>
            <person name="Mandon E.C."/>
            <person name="Ehses I."/>
            <person name="Rother J."/>
            <person name="van Echten G."/>
            <person name="Sandhoff K."/>
        </authorList>
    </citation>
    <scope>SUBCELLULAR LOCATION</scope>
    <source>
        <tissue>Liver</tissue>
    </source>
</reference>
<reference key="6">
    <citation type="journal article" date="2010" name="Cell">
        <title>A tissue-specific atlas of mouse protein phosphorylation and expression.</title>
        <authorList>
            <person name="Huttlin E.L."/>
            <person name="Jedrychowski M.P."/>
            <person name="Elias J.E."/>
            <person name="Goswami T."/>
            <person name="Rad R."/>
            <person name="Beausoleil S.A."/>
            <person name="Villen J."/>
            <person name="Haas W."/>
            <person name="Sowa M.E."/>
            <person name="Gygi S.P."/>
        </authorList>
    </citation>
    <scope>IDENTIFICATION BY MASS SPECTROMETRY [LARGE SCALE ANALYSIS]</scope>
    <source>
        <tissue>Kidney</tissue>
        <tissue>Liver</tissue>
    </source>
</reference>
<reference key="7">
    <citation type="journal article" date="2011" name="J. Neurosci.">
        <title>MicroRNA-137/181c regulates serine palmitoyltransferase and in turn amyloid beta, novel targets in sporadic Alzheimer's disease.</title>
        <authorList>
            <person name="Geekiyanage H."/>
            <person name="Chan C."/>
        </authorList>
    </citation>
    <scope>INDUCTION BY HIGH FAT DIET</scope>
    <scope>TISSUE SPECIFICITY</scope>
    <scope>DEVELOPMENTAL STAGE</scope>
</reference>
<reference key="8">
    <citation type="journal article" date="2015" name="Nat. Med.">
        <title>Nogo-B regulates endothelial sphingolipid homeostasis to control vascular function and blood pressure.</title>
        <authorList>
            <person name="Cantalupo A."/>
            <person name="Zhang Y."/>
            <person name="Kothiya M."/>
            <person name="Galvani S."/>
            <person name="Obinata H."/>
            <person name="Bucci M."/>
            <person name="Giordano F.J."/>
            <person name="Jiang X.C."/>
            <person name="Hla T."/>
            <person name="Di Lorenzo A."/>
        </authorList>
    </citation>
    <scope>SUBCELLULAR LOCATION</scope>
    <scope>INTERACTION WITH RTN4</scope>
</reference>
<reference key="9">
    <citation type="journal article" date="2016" name="Cell Metab.">
        <title>Adipocyte Ceramides Regulate Subcutaneous Adipose Browning, Inflammation, and Metabolism.</title>
        <authorList>
            <person name="Chaurasia B."/>
            <person name="Kaddai V.A."/>
            <person name="Lancaster G.I."/>
            <person name="Henstridge D.C."/>
            <person name="Sriram S."/>
            <person name="Galam D.L."/>
            <person name="Gopalan V."/>
            <person name="Prakash K.N."/>
            <person name="Velan S.S."/>
            <person name="Bulchand S."/>
            <person name="Tsong T.J."/>
            <person name="Wang M."/>
            <person name="Siddique M.M."/>
            <person name="Yuguang G."/>
            <person name="Sigmundsson K."/>
            <person name="Mellet N.A."/>
            <person name="Weir J.M."/>
            <person name="Meikle P.J."/>
            <person name="Bin M Yassin M.S."/>
            <person name="Shabbir A."/>
            <person name="Shayman J.A."/>
            <person name="Hirabayashi Y."/>
            <person name="Shiow S.T."/>
            <person name="Sugii S."/>
            <person name="Summers S.A."/>
        </authorList>
    </citation>
    <scope>TISSUE SPECIFICITY</scope>
</reference>
<reference key="10">
    <citation type="journal article" date="2017" name="J. Biol. Chem.">
        <title>De Novo Sphingolipid Biosynthesis Is Required for Adipocyte Survival and Metabolic Homeostasis.</title>
        <authorList>
            <person name="Alexaki A."/>
            <person name="Clarke B.A."/>
            <person name="Gavrilova O."/>
            <person name="Ma Y."/>
            <person name="Zhu H."/>
            <person name="Ma X."/>
            <person name="Xu L."/>
            <person name="Tuymetova G."/>
            <person name="Larman B.C."/>
            <person name="Allende M.L."/>
            <person name="Dunn T.M."/>
            <person name="Proia R.L."/>
        </authorList>
    </citation>
    <scope>FUNCTION</scope>
    <scope>DISRUPTION PHENOTYPE</scope>
    <scope>PATHWAY</scope>
</reference>
<organism>
    <name type="scientific">Mus musculus</name>
    <name type="common">Mouse</name>
    <dbReference type="NCBI Taxonomy" id="10090"/>
    <lineage>
        <taxon>Eukaryota</taxon>
        <taxon>Metazoa</taxon>
        <taxon>Chordata</taxon>
        <taxon>Craniata</taxon>
        <taxon>Vertebrata</taxon>
        <taxon>Euteleostomi</taxon>
        <taxon>Mammalia</taxon>
        <taxon>Eutheria</taxon>
        <taxon>Euarchontoglires</taxon>
        <taxon>Glires</taxon>
        <taxon>Rodentia</taxon>
        <taxon>Myomorpha</taxon>
        <taxon>Muroidea</taxon>
        <taxon>Muridae</taxon>
        <taxon>Murinae</taxon>
        <taxon>Mus</taxon>
        <taxon>Mus</taxon>
    </lineage>
</organism>